<accession>B7UYX1</accession>
<evidence type="ECO:0000255" key="1">
    <source>
        <dbReference type="HAMAP-Rule" id="MF_00367"/>
    </source>
</evidence>
<evidence type="ECO:0000255" key="2">
    <source>
        <dbReference type="PROSITE-ProRule" id="PRU01050"/>
    </source>
</evidence>
<protein>
    <recommendedName>
        <fullName evidence="1">GTPase Era</fullName>
    </recommendedName>
</protein>
<feature type="chain" id="PRO_1000121345" description="GTPase Era">
    <location>
        <begin position="1"/>
        <end position="305"/>
    </location>
</feature>
<feature type="domain" description="Era-type G" evidence="2">
    <location>
        <begin position="13"/>
        <end position="181"/>
    </location>
</feature>
<feature type="domain" description="KH type-2" evidence="1">
    <location>
        <begin position="204"/>
        <end position="288"/>
    </location>
</feature>
<feature type="region of interest" description="G1" evidence="2">
    <location>
        <begin position="21"/>
        <end position="28"/>
    </location>
</feature>
<feature type="region of interest" description="G2" evidence="2">
    <location>
        <begin position="47"/>
        <end position="51"/>
    </location>
</feature>
<feature type="region of interest" description="G3" evidence="2">
    <location>
        <begin position="68"/>
        <end position="71"/>
    </location>
</feature>
<feature type="region of interest" description="G4" evidence="2">
    <location>
        <begin position="130"/>
        <end position="133"/>
    </location>
</feature>
<feature type="region of interest" description="G5" evidence="2">
    <location>
        <begin position="160"/>
        <end position="162"/>
    </location>
</feature>
<feature type="binding site" evidence="1">
    <location>
        <begin position="21"/>
        <end position="28"/>
    </location>
    <ligand>
        <name>GTP</name>
        <dbReference type="ChEBI" id="CHEBI:37565"/>
    </ligand>
</feature>
<feature type="binding site" evidence="1">
    <location>
        <begin position="68"/>
        <end position="72"/>
    </location>
    <ligand>
        <name>GTP</name>
        <dbReference type="ChEBI" id="CHEBI:37565"/>
    </ligand>
</feature>
<feature type="binding site" evidence="1">
    <location>
        <begin position="130"/>
        <end position="133"/>
    </location>
    <ligand>
        <name>GTP</name>
        <dbReference type="ChEBI" id="CHEBI:37565"/>
    </ligand>
</feature>
<organism>
    <name type="scientific">Pseudomonas aeruginosa (strain LESB58)</name>
    <dbReference type="NCBI Taxonomy" id="557722"/>
    <lineage>
        <taxon>Bacteria</taxon>
        <taxon>Pseudomonadati</taxon>
        <taxon>Pseudomonadota</taxon>
        <taxon>Gammaproteobacteria</taxon>
        <taxon>Pseudomonadales</taxon>
        <taxon>Pseudomonadaceae</taxon>
        <taxon>Pseudomonas</taxon>
    </lineage>
</organism>
<comment type="function">
    <text evidence="1">An essential GTPase that binds both GDP and GTP, with rapid nucleotide exchange. Plays a role in 16S rRNA processing and 30S ribosomal subunit biogenesis and possibly also in cell cycle regulation and energy metabolism.</text>
</comment>
<comment type="subunit">
    <text evidence="1">Monomer.</text>
</comment>
<comment type="subcellular location">
    <subcellularLocation>
        <location>Cytoplasm</location>
    </subcellularLocation>
    <subcellularLocation>
        <location evidence="1">Cell inner membrane</location>
        <topology evidence="1">Peripheral membrane protein</topology>
    </subcellularLocation>
</comment>
<comment type="similarity">
    <text evidence="1 2">Belongs to the TRAFAC class TrmE-Era-EngA-EngB-Septin-like GTPase superfamily. Era GTPase family.</text>
</comment>
<dbReference type="EMBL" id="FM209186">
    <property type="protein sequence ID" value="CAW29326.1"/>
    <property type="molecule type" value="Genomic_DNA"/>
</dbReference>
<dbReference type="RefSeq" id="WP_003085566.1">
    <property type="nucleotide sequence ID" value="NC_011770.1"/>
</dbReference>
<dbReference type="SMR" id="B7UYX1"/>
<dbReference type="KEGG" id="pag:PLES_45721"/>
<dbReference type="HOGENOM" id="CLU_038009_1_2_6"/>
<dbReference type="GO" id="GO:0005829">
    <property type="term" value="C:cytosol"/>
    <property type="evidence" value="ECO:0007669"/>
    <property type="project" value="TreeGrafter"/>
</dbReference>
<dbReference type="GO" id="GO:0005886">
    <property type="term" value="C:plasma membrane"/>
    <property type="evidence" value="ECO:0007669"/>
    <property type="project" value="UniProtKB-SubCell"/>
</dbReference>
<dbReference type="GO" id="GO:0005525">
    <property type="term" value="F:GTP binding"/>
    <property type="evidence" value="ECO:0007669"/>
    <property type="project" value="UniProtKB-UniRule"/>
</dbReference>
<dbReference type="GO" id="GO:0003924">
    <property type="term" value="F:GTPase activity"/>
    <property type="evidence" value="ECO:0007669"/>
    <property type="project" value="UniProtKB-UniRule"/>
</dbReference>
<dbReference type="GO" id="GO:0043024">
    <property type="term" value="F:ribosomal small subunit binding"/>
    <property type="evidence" value="ECO:0007669"/>
    <property type="project" value="TreeGrafter"/>
</dbReference>
<dbReference type="GO" id="GO:0070181">
    <property type="term" value="F:small ribosomal subunit rRNA binding"/>
    <property type="evidence" value="ECO:0007669"/>
    <property type="project" value="UniProtKB-UniRule"/>
</dbReference>
<dbReference type="GO" id="GO:0000028">
    <property type="term" value="P:ribosomal small subunit assembly"/>
    <property type="evidence" value="ECO:0007669"/>
    <property type="project" value="TreeGrafter"/>
</dbReference>
<dbReference type="CDD" id="cd04163">
    <property type="entry name" value="Era"/>
    <property type="match status" value="1"/>
</dbReference>
<dbReference type="CDD" id="cd22534">
    <property type="entry name" value="KH-II_Era"/>
    <property type="match status" value="1"/>
</dbReference>
<dbReference type="FunFam" id="3.30.300.20:FF:000003">
    <property type="entry name" value="GTPase Era"/>
    <property type="match status" value="1"/>
</dbReference>
<dbReference type="FunFam" id="3.40.50.300:FF:000094">
    <property type="entry name" value="GTPase Era"/>
    <property type="match status" value="1"/>
</dbReference>
<dbReference type="Gene3D" id="3.30.300.20">
    <property type="match status" value="1"/>
</dbReference>
<dbReference type="Gene3D" id="3.40.50.300">
    <property type="entry name" value="P-loop containing nucleotide triphosphate hydrolases"/>
    <property type="match status" value="1"/>
</dbReference>
<dbReference type="HAMAP" id="MF_00367">
    <property type="entry name" value="GTPase_Era"/>
    <property type="match status" value="1"/>
</dbReference>
<dbReference type="InterPro" id="IPR030388">
    <property type="entry name" value="G_ERA_dom"/>
</dbReference>
<dbReference type="InterPro" id="IPR006073">
    <property type="entry name" value="GTP-bd"/>
</dbReference>
<dbReference type="InterPro" id="IPR005662">
    <property type="entry name" value="GTPase_Era-like"/>
</dbReference>
<dbReference type="InterPro" id="IPR015946">
    <property type="entry name" value="KH_dom-like_a/b"/>
</dbReference>
<dbReference type="InterPro" id="IPR004044">
    <property type="entry name" value="KH_dom_type_2"/>
</dbReference>
<dbReference type="InterPro" id="IPR009019">
    <property type="entry name" value="KH_sf_prok-type"/>
</dbReference>
<dbReference type="InterPro" id="IPR027417">
    <property type="entry name" value="P-loop_NTPase"/>
</dbReference>
<dbReference type="InterPro" id="IPR005225">
    <property type="entry name" value="Small_GTP-bd"/>
</dbReference>
<dbReference type="NCBIfam" id="TIGR00436">
    <property type="entry name" value="era"/>
    <property type="match status" value="1"/>
</dbReference>
<dbReference type="NCBIfam" id="NF000908">
    <property type="entry name" value="PRK00089.1"/>
    <property type="match status" value="1"/>
</dbReference>
<dbReference type="NCBIfam" id="TIGR00231">
    <property type="entry name" value="small_GTP"/>
    <property type="match status" value="1"/>
</dbReference>
<dbReference type="PANTHER" id="PTHR42698">
    <property type="entry name" value="GTPASE ERA"/>
    <property type="match status" value="1"/>
</dbReference>
<dbReference type="PANTHER" id="PTHR42698:SF1">
    <property type="entry name" value="GTPASE ERA, MITOCHONDRIAL"/>
    <property type="match status" value="1"/>
</dbReference>
<dbReference type="Pfam" id="PF07650">
    <property type="entry name" value="KH_2"/>
    <property type="match status" value="1"/>
</dbReference>
<dbReference type="Pfam" id="PF01926">
    <property type="entry name" value="MMR_HSR1"/>
    <property type="match status" value="1"/>
</dbReference>
<dbReference type="PRINTS" id="PR00326">
    <property type="entry name" value="GTP1OBG"/>
</dbReference>
<dbReference type="SUPFAM" id="SSF52540">
    <property type="entry name" value="P-loop containing nucleoside triphosphate hydrolases"/>
    <property type="match status" value="1"/>
</dbReference>
<dbReference type="SUPFAM" id="SSF54814">
    <property type="entry name" value="Prokaryotic type KH domain (KH-domain type II)"/>
    <property type="match status" value="1"/>
</dbReference>
<dbReference type="PROSITE" id="PS51713">
    <property type="entry name" value="G_ERA"/>
    <property type="match status" value="1"/>
</dbReference>
<dbReference type="PROSITE" id="PS50823">
    <property type="entry name" value="KH_TYPE_2"/>
    <property type="match status" value="1"/>
</dbReference>
<name>ERA_PSEA8</name>
<gene>
    <name evidence="1" type="primary">era</name>
    <name type="ordered locus">PLES_45721</name>
</gene>
<proteinExistence type="inferred from homology"/>
<sequence length="305" mass="34550">MTDMHDDIPAGSRCGYVAIVGRPNVGKSTLLNHILGQKLAITSRKPQTTRHNMLGIKTEGEVQAVYVDTPGLHKSGEKALNRYMNRTASAALKDVDVVIFVVDRTRWTEEDQMVLERVQYVSCPVLIAVNKTDRIEEKADLLPHLEWLTQQLPKAEVVPISAQHGTNLDVLEKLVAERLPESEHFFPEDQITDRSSRFLAAELVREKIMRQLGAELPYQITVEIEEFKQEGRILHIHALILVEREGQKKIIIGDKGERIKSIGQNARKDMEVLFDSKVMLNLWVKVKGGWSDDERALRSLGYGDL</sequence>
<keyword id="KW-0997">Cell inner membrane</keyword>
<keyword id="KW-1003">Cell membrane</keyword>
<keyword id="KW-0963">Cytoplasm</keyword>
<keyword id="KW-0342">GTP-binding</keyword>
<keyword id="KW-0472">Membrane</keyword>
<keyword id="KW-0547">Nucleotide-binding</keyword>
<keyword id="KW-0690">Ribosome biogenesis</keyword>
<keyword id="KW-0694">RNA-binding</keyword>
<keyword id="KW-0699">rRNA-binding</keyword>
<reference key="1">
    <citation type="journal article" date="2009" name="Genome Res.">
        <title>Newly introduced genomic prophage islands are critical determinants of in vivo competitiveness in the Liverpool epidemic strain of Pseudomonas aeruginosa.</title>
        <authorList>
            <person name="Winstanley C."/>
            <person name="Langille M.G.I."/>
            <person name="Fothergill J.L."/>
            <person name="Kukavica-Ibrulj I."/>
            <person name="Paradis-Bleau C."/>
            <person name="Sanschagrin F."/>
            <person name="Thomson N.R."/>
            <person name="Winsor G.L."/>
            <person name="Quail M.A."/>
            <person name="Lennard N."/>
            <person name="Bignell A."/>
            <person name="Clarke L."/>
            <person name="Seeger K."/>
            <person name="Saunders D."/>
            <person name="Harris D."/>
            <person name="Parkhill J."/>
            <person name="Hancock R.E.W."/>
            <person name="Brinkman F.S.L."/>
            <person name="Levesque R.C."/>
        </authorList>
    </citation>
    <scope>NUCLEOTIDE SEQUENCE [LARGE SCALE GENOMIC DNA]</scope>
    <source>
        <strain>LESB58</strain>
    </source>
</reference>